<name>RL27_METPP</name>
<accession>A2SD35</accession>
<feature type="chain" id="PRO_1000017515" description="Large ribosomal subunit protein bL27">
    <location>
        <begin position="1"/>
        <end position="85"/>
    </location>
</feature>
<feature type="region of interest" description="Disordered" evidence="2">
    <location>
        <begin position="1"/>
        <end position="20"/>
    </location>
</feature>
<feature type="compositionally biased region" description="Gly residues" evidence="2">
    <location>
        <begin position="1"/>
        <end position="10"/>
    </location>
</feature>
<sequence>MAQKKGGGSTRNGRDSQPKMLGVKAFGGQAVQAGSIIVRQRGTQFHAGSNVGIGKDHTLFALVDGKVSFAVKGERNRRTVAIDPV</sequence>
<proteinExistence type="inferred from homology"/>
<gene>
    <name evidence="1" type="primary">rpmA</name>
    <name type="ordered locus">Mpe_A0512</name>
</gene>
<comment type="similarity">
    <text evidence="1">Belongs to the bacterial ribosomal protein bL27 family.</text>
</comment>
<reference key="1">
    <citation type="journal article" date="2007" name="J. Bacteriol.">
        <title>Whole-genome analysis of the methyl tert-butyl ether-degrading beta-proteobacterium Methylibium petroleiphilum PM1.</title>
        <authorList>
            <person name="Kane S.R."/>
            <person name="Chakicherla A.Y."/>
            <person name="Chain P.S.G."/>
            <person name="Schmidt R."/>
            <person name="Shin M.W."/>
            <person name="Legler T.C."/>
            <person name="Scow K.M."/>
            <person name="Larimer F.W."/>
            <person name="Lucas S.M."/>
            <person name="Richardson P.M."/>
            <person name="Hristova K.R."/>
        </authorList>
    </citation>
    <scope>NUCLEOTIDE SEQUENCE [LARGE SCALE GENOMIC DNA]</scope>
    <source>
        <strain>ATCC BAA-1232 / LMG 22953 / PM1</strain>
    </source>
</reference>
<organism>
    <name type="scientific">Methylibium petroleiphilum (strain ATCC BAA-1232 / LMG 22953 / PM1)</name>
    <dbReference type="NCBI Taxonomy" id="420662"/>
    <lineage>
        <taxon>Bacteria</taxon>
        <taxon>Pseudomonadati</taxon>
        <taxon>Pseudomonadota</taxon>
        <taxon>Betaproteobacteria</taxon>
        <taxon>Burkholderiales</taxon>
        <taxon>Sphaerotilaceae</taxon>
        <taxon>Methylibium</taxon>
    </lineage>
</organism>
<dbReference type="EMBL" id="CP000555">
    <property type="protein sequence ID" value="ABM93474.1"/>
    <property type="molecule type" value="Genomic_DNA"/>
</dbReference>
<dbReference type="RefSeq" id="WP_011828112.1">
    <property type="nucleotide sequence ID" value="NC_008825.1"/>
</dbReference>
<dbReference type="SMR" id="A2SD35"/>
<dbReference type="STRING" id="420662.Mpe_A0512"/>
<dbReference type="KEGG" id="mpt:Mpe_A0512"/>
<dbReference type="eggNOG" id="COG0211">
    <property type="taxonomic scope" value="Bacteria"/>
</dbReference>
<dbReference type="HOGENOM" id="CLU_095424_4_1_4"/>
<dbReference type="Proteomes" id="UP000000366">
    <property type="component" value="Chromosome"/>
</dbReference>
<dbReference type="GO" id="GO:0022625">
    <property type="term" value="C:cytosolic large ribosomal subunit"/>
    <property type="evidence" value="ECO:0007669"/>
    <property type="project" value="TreeGrafter"/>
</dbReference>
<dbReference type="GO" id="GO:0003735">
    <property type="term" value="F:structural constituent of ribosome"/>
    <property type="evidence" value="ECO:0007669"/>
    <property type="project" value="InterPro"/>
</dbReference>
<dbReference type="GO" id="GO:0006412">
    <property type="term" value="P:translation"/>
    <property type="evidence" value="ECO:0007669"/>
    <property type="project" value="UniProtKB-UniRule"/>
</dbReference>
<dbReference type="FunFam" id="2.40.50.100:FF:000001">
    <property type="entry name" value="50S ribosomal protein L27"/>
    <property type="match status" value="1"/>
</dbReference>
<dbReference type="Gene3D" id="2.40.50.100">
    <property type="match status" value="1"/>
</dbReference>
<dbReference type="HAMAP" id="MF_00539">
    <property type="entry name" value="Ribosomal_bL27"/>
    <property type="match status" value="1"/>
</dbReference>
<dbReference type="InterPro" id="IPR001684">
    <property type="entry name" value="Ribosomal_bL27"/>
</dbReference>
<dbReference type="InterPro" id="IPR018261">
    <property type="entry name" value="Ribosomal_bL27_CS"/>
</dbReference>
<dbReference type="NCBIfam" id="TIGR00062">
    <property type="entry name" value="L27"/>
    <property type="match status" value="1"/>
</dbReference>
<dbReference type="PANTHER" id="PTHR15893:SF0">
    <property type="entry name" value="LARGE RIBOSOMAL SUBUNIT PROTEIN BL27M"/>
    <property type="match status" value="1"/>
</dbReference>
<dbReference type="PANTHER" id="PTHR15893">
    <property type="entry name" value="RIBOSOMAL PROTEIN L27"/>
    <property type="match status" value="1"/>
</dbReference>
<dbReference type="Pfam" id="PF01016">
    <property type="entry name" value="Ribosomal_L27"/>
    <property type="match status" value="1"/>
</dbReference>
<dbReference type="PRINTS" id="PR00063">
    <property type="entry name" value="RIBOSOMALL27"/>
</dbReference>
<dbReference type="SUPFAM" id="SSF110324">
    <property type="entry name" value="Ribosomal L27 protein-like"/>
    <property type="match status" value="1"/>
</dbReference>
<dbReference type="PROSITE" id="PS00831">
    <property type="entry name" value="RIBOSOMAL_L27"/>
    <property type="match status" value="1"/>
</dbReference>
<keyword id="KW-1185">Reference proteome</keyword>
<keyword id="KW-0687">Ribonucleoprotein</keyword>
<keyword id="KW-0689">Ribosomal protein</keyword>
<protein>
    <recommendedName>
        <fullName evidence="1">Large ribosomal subunit protein bL27</fullName>
    </recommendedName>
    <alternativeName>
        <fullName evidence="3">50S ribosomal protein L27</fullName>
    </alternativeName>
</protein>
<evidence type="ECO:0000255" key="1">
    <source>
        <dbReference type="HAMAP-Rule" id="MF_00539"/>
    </source>
</evidence>
<evidence type="ECO:0000256" key="2">
    <source>
        <dbReference type="SAM" id="MobiDB-lite"/>
    </source>
</evidence>
<evidence type="ECO:0000305" key="3"/>